<keyword id="KW-0963">Cytoplasm</keyword>
<keyword id="KW-0489">Methyltransferase</keyword>
<keyword id="KW-1185">Reference proteome</keyword>
<keyword id="KW-0698">rRNA processing</keyword>
<keyword id="KW-0949">S-adenosyl-L-methionine</keyword>
<keyword id="KW-0808">Transferase</keyword>
<gene>
    <name evidence="1" type="primary">rsmH</name>
    <name type="synonym">mraW</name>
    <name type="ordered locus">AM1_0849</name>
</gene>
<dbReference type="EC" id="2.1.1.199" evidence="1"/>
<dbReference type="EMBL" id="CP000828">
    <property type="protein sequence ID" value="ABW25893.1"/>
    <property type="molecule type" value="Genomic_DNA"/>
</dbReference>
<dbReference type="RefSeq" id="WP_012161471.1">
    <property type="nucleotide sequence ID" value="NC_009925.1"/>
</dbReference>
<dbReference type="SMR" id="B0BYK8"/>
<dbReference type="STRING" id="329726.AM1_0849"/>
<dbReference type="KEGG" id="amr:AM1_0849"/>
<dbReference type="eggNOG" id="COG0275">
    <property type="taxonomic scope" value="Bacteria"/>
</dbReference>
<dbReference type="HOGENOM" id="CLU_038422_3_0_3"/>
<dbReference type="OrthoDB" id="9806637at2"/>
<dbReference type="Proteomes" id="UP000000268">
    <property type="component" value="Chromosome"/>
</dbReference>
<dbReference type="GO" id="GO:0005737">
    <property type="term" value="C:cytoplasm"/>
    <property type="evidence" value="ECO:0007669"/>
    <property type="project" value="UniProtKB-SubCell"/>
</dbReference>
<dbReference type="GO" id="GO:0071424">
    <property type="term" value="F:rRNA (cytosine-N4-)-methyltransferase activity"/>
    <property type="evidence" value="ECO:0007669"/>
    <property type="project" value="UniProtKB-UniRule"/>
</dbReference>
<dbReference type="GO" id="GO:0070475">
    <property type="term" value="P:rRNA base methylation"/>
    <property type="evidence" value="ECO:0007669"/>
    <property type="project" value="UniProtKB-UniRule"/>
</dbReference>
<dbReference type="CDD" id="cd02440">
    <property type="entry name" value="AdoMet_MTases"/>
    <property type="match status" value="1"/>
</dbReference>
<dbReference type="FunFam" id="1.10.150.170:FF:000003">
    <property type="entry name" value="Ribosomal RNA small subunit methyltransferase H"/>
    <property type="match status" value="1"/>
</dbReference>
<dbReference type="Gene3D" id="1.10.150.170">
    <property type="entry name" value="Putative methyltransferase TM0872, insert domain"/>
    <property type="match status" value="1"/>
</dbReference>
<dbReference type="Gene3D" id="3.40.50.150">
    <property type="entry name" value="Vaccinia Virus protein VP39"/>
    <property type="match status" value="1"/>
</dbReference>
<dbReference type="HAMAP" id="MF_01007">
    <property type="entry name" value="16SrRNA_methyltr_H"/>
    <property type="match status" value="1"/>
</dbReference>
<dbReference type="InterPro" id="IPR002903">
    <property type="entry name" value="RsmH"/>
</dbReference>
<dbReference type="InterPro" id="IPR023397">
    <property type="entry name" value="SAM-dep_MeTrfase_MraW_recog"/>
</dbReference>
<dbReference type="InterPro" id="IPR029063">
    <property type="entry name" value="SAM-dependent_MTases_sf"/>
</dbReference>
<dbReference type="NCBIfam" id="TIGR00006">
    <property type="entry name" value="16S rRNA (cytosine(1402)-N(4))-methyltransferase RsmH"/>
    <property type="match status" value="1"/>
</dbReference>
<dbReference type="PANTHER" id="PTHR11265:SF0">
    <property type="entry name" value="12S RRNA N4-METHYLCYTIDINE METHYLTRANSFERASE"/>
    <property type="match status" value="1"/>
</dbReference>
<dbReference type="PANTHER" id="PTHR11265">
    <property type="entry name" value="S-ADENOSYL-METHYLTRANSFERASE MRAW"/>
    <property type="match status" value="1"/>
</dbReference>
<dbReference type="Pfam" id="PF01795">
    <property type="entry name" value="Methyltransf_5"/>
    <property type="match status" value="1"/>
</dbReference>
<dbReference type="PIRSF" id="PIRSF004486">
    <property type="entry name" value="MraW"/>
    <property type="match status" value="1"/>
</dbReference>
<dbReference type="SUPFAM" id="SSF81799">
    <property type="entry name" value="Putative methyltransferase TM0872, insert domain"/>
    <property type="match status" value="1"/>
</dbReference>
<dbReference type="SUPFAM" id="SSF53335">
    <property type="entry name" value="S-adenosyl-L-methionine-dependent methyltransferases"/>
    <property type="match status" value="1"/>
</dbReference>
<reference key="1">
    <citation type="journal article" date="2008" name="Proc. Natl. Acad. Sci. U.S.A.">
        <title>Niche adaptation and genome expansion in the chlorophyll d-producing cyanobacterium Acaryochloris marina.</title>
        <authorList>
            <person name="Swingley W.D."/>
            <person name="Chen M."/>
            <person name="Cheung P.C."/>
            <person name="Conrad A.L."/>
            <person name="Dejesa L.C."/>
            <person name="Hao J."/>
            <person name="Honchak B.M."/>
            <person name="Karbach L.E."/>
            <person name="Kurdoglu A."/>
            <person name="Lahiri S."/>
            <person name="Mastrian S.D."/>
            <person name="Miyashita H."/>
            <person name="Page L."/>
            <person name="Ramakrishna P."/>
            <person name="Satoh S."/>
            <person name="Sattley W.M."/>
            <person name="Shimada Y."/>
            <person name="Taylor H.L."/>
            <person name="Tomo T."/>
            <person name="Tsuchiya T."/>
            <person name="Wang Z.T."/>
            <person name="Raymond J."/>
            <person name="Mimuro M."/>
            <person name="Blankenship R.E."/>
            <person name="Touchman J.W."/>
        </authorList>
    </citation>
    <scope>NUCLEOTIDE SEQUENCE [LARGE SCALE GENOMIC DNA]</scope>
    <source>
        <strain>MBIC 11017</strain>
    </source>
</reference>
<organism>
    <name type="scientific">Acaryochloris marina (strain MBIC 11017)</name>
    <dbReference type="NCBI Taxonomy" id="329726"/>
    <lineage>
        <taxon>Bacteria</taxon>
        <taxon>Bacillati</taxon>
        <taxon>Cyanobacteriota</taxon>
        <taxon>Cyanophyceae</taxon>
        <taxon>Acaryochloridales</taxon>
        <taxon>Acaryochloridaceae</taxon>
        <taxon>Acaryochloris</taxon>
    </lineage>
</organism>
<proteinExistence type="inferred from homology"/>
<feature type="chain" id="PRO_0000386677" description="Ribosomal RNA small subunit methyltransferase H">
    <location>
        <begin position="1"/>
        <end position="298"/>
    </location>
</feature>
<feature type="binding site" evidence="1">
    <location>
        <begin position="38"/>
        <end position="40"/>
    </location>
    <ligand>
        <name>S-adenosyl-L-methionine</name>
        <dbReference type="ChEBI" id="CHEBI:59789"/>
    </ligand>
</feature>
<feature type="binding site" evidence="1">
    <location>
        <position position="57"/>
    </location>
    <ligand>
        <name>S-adenosyl-L-methionine</name>
        <dbReference type="ChEBI" id="CHEBI:59789"/>
    </ligand>
</feature>
<feature type="binding site" evidence="1">
    <location>
        <position position="84"/>
    </location>
    <ligand>
        <name>S-adenosyl-L-methionine</name>
        <dbReference type="ChEBI" id="CHEBI:59789"/>
    </ligand>
</feature>
<feature type="binding site" evidence="1">
    <location>
        <position position="100"/>
    </location>
    <ligand>
        <name>S-adenosyl-L-methionine</name>
        <dbReference type="ChEBI" id="CHEBI:59789"/>
    </ligand>
</feature>
<feature type="binding site" evidence="1">
    <location>
        <position position="107"/>
    </location>
    <ligand>
        <name>S-adenosyl-L-methionine</name>
        <dbReference type="ChEBI" id="CHEBI:59789"/>
    </ligand>
</feature>
<accession>B0BYK8</accession>
<evidence type="ECO:0000255" key="1">
    <source>
        <dbReference type="HAMAP-Rule" id="MF_01007"/>
    </source>
</evidence>
<protein>
    <recommendedName>
        <fullName evidence="1">Ribosomal RNA small subunit methyltransferase H</fullName>
        <ecNumber evidence="1">2.1.1.199</ecNumber>
    </recommendedName>
    <alternativeName>
        <fullName evidence="1">16S rRNA m(4)C1402 methyltransferase</fullName>
    </alternativeName>
    <alternativeName>
        <fullName evidence="1">rRNA (cytosine-N(4)-)-methyltransferase RsmH</fullName>
    </alternativeName>
</protein>
<name>RSMH_ACAM1</name>
<sequence length="298" mass="33564">MTPDPGAFNHISVLSHELMAGLMLQEQGLYLDATVGGGGHSALILSQYPQTQVIALDQDIQALEAARAKLHDACDRIQFWQGNFSTYHPGELRFDGIIADLGVSSAQLDRPERGFSFRYDADLDMRMDQSQGLTAADVINTYSERDLADIFYHYGEERFSRRIARKIVSKRPLRTTSDLARVVASSLPAAKGRRRRIHPATRVFQALRIAVNQELQVLEKFIEIAPTWLKPGGRIGIISFHSLEDRIVKIHFRQNSLLQVVTKKPIVASEQEKRENSRSRSAKLRFAERVPLADEAES</sequence>
<comment type="function">
    <text evidence="1">Specifically methylates the N4 position of cytidine in position 1402 (C1402) of 16S rRNA.</text>
</comment>
<comment type="catalytic activity">
    <reaction evidence="1">
        <text>cytidine(1402) in 16S rRNA + S-adenosyl-L-methionine = N(4)-methylcytidine(1402) in 16S rRNA + S-adenosyl-L-homocysteine + H(+)</text>
        <dbReference type="Rhea" id="RHEA:42928"/>
        <dbReference type="Rhea" id="RHEA-COMP:10286"/>
        <dbReference type="Rhea" id="RHEA-COMP:10287"/>
        <dbReference type="ChEBI" id="CHEBI:15378"/>
        <dbReference type="ChEBI" id="CHEBI:57856"/>
        <dbReference type="ChEBI" id="CHEBI:59789"/>
        <dbReference type="ChEBI" id="CHEBI:74506"/>
        <dbReference type="ChEBI" id="CHEBI:82748"/>
        <dbReference type="EC" id="2.1.1.199"/>
    </reaction>
</comment>
<comment type="subcellular location">
    <subcellularLocation>
        <location evidence="1">Cytoplasm</location>
    </subcellularLocation>
</comment>
<comment type="similarity">
    <text evidence="1">Belongs to the methyltransferase superfamily. RsmH family.</text>
</comment>